<protein>
    <recommendedName>
        <fullName evidence="1">Octanoyltransferase</fullName>
        <ecNumber evidence="1">2.3.1.181</ecNumber>
    </recommendedName>
    <alternativeName>
        <fullName evidence="1">Lipoate-protein ligase B</fullName>
    </alternativeName>
    <alternativeName>
        <fullName evidence="1">Lipoyl/octanoyl transferase</fullName>
    </alternativeName>
    <alternativeName>
        <fullName evidence="1">Octanoyl-[acyl-carrier-protein]-protein N-octanoyltransferase</fullName>
    </alternativeName>
</protein>
<sequence length="218" mass="25552">MNNRIILFQNFGLKHWIDMFNKMHAFTEVRNINTYDEIWFLEHYPIFTQGLLQKINTITYNNDILHDIPIVSTDRGGQITYHGPGQQILYFLIDLKRRKITIRDLINIMQNLIIETLNYFSIKSHIKKNSPGVYVNNKKISSLGLRVKKGFTLHGLSLNVDMDLTPFNYIYPCGDINIKMTQVKEFNSFLTLNDIRVILIKKLSQLLNVSIIEKFSIK</sequence>
<gene>
    <name evidence="1" type="primary">lipB</name>
    <name type="ordered locus">BUsg_258</name>
</gene>
<organism>
    <name type="scientific">Buchnera aphidicola subsp. Schizaphis graminum (strain Sg)</name>
    <dbReference type="NCBI Taxonomy" id="198804"/>
    <lineage>
        <taxon>Bacteria</taxon>
        <taxon>Pseudomonadati</taxon>
        <taxon>Pseudomonadota</taxon>
        <taxon>Gammaproteobacteria</taxon>
        <taxon>Enterobacterales</taxon>
        <taxon>Erwiniaceae</taxon>
        <taxon>Buchnera</taxon>
    </lineage>
</organism>
<keyword id="KW-0012">Acyltransferase</keyword>
<keyword id="KW-0963">Cytoplasm</keyword>
<keyword id="KW-0808">Transferase</keyword>
<dbReference type="EC" id="2.3.1.181" evidence="1"/>
<dbReference type="EMBL" id="AE013218">
    <property type="protein sequence ID" value="AAM67816.1"/>
    <property type="status" value="ALT_INIT"/>
    <property type="molecule type" value="Genomic_DNA"/>
</dbReference>
<dbReference type="RefSeq" id="WP_011053783.1">
    <property type="nucleotide sequence ID" value="NC_004061.1"/>
</dbReference>
<dbReference type="SMR" id="Q8K9Q3"/>
<dbReference type="STRING" id="198804.BUsg_258"/>
<dbReference type="GeneID" id="93003728"/>
<dbReference type="KEGG" id="bas:BUsg_258"/>
<dbReference type="eggNOG" id="COG0321">
    <property type="taxonomic scope" value="Bacteria"/>
</dbReference>
<dbReference type="HOGENOM" id="CLU_035168_3_1_6"/>
<dbReference type="UniPathway" id="UPA00538">
    <property type="reaction ID" value="UER00592"/>
</dbReference>
<dbReference type="Proteomes" id="UP000000416">
    <property type="component" value="Chromosome"/>
</dbReference>
<dbReference type="GO" id="GO:0005737">
    <property type="term" value="C:cytoplasm"/>
    <property type="evidence" value="ECO:0007669"/>
    <property type="project" value="UniProtKB-SubCell"/>
</dbReference>
<dbReference type="GO" id="GO:0033819">
    <property type="term" value="F:lipoyl(octanoyl) transferase activity"/>
    <property type="evidence" value="ECO:0007669"/>
    <property type="project" value="UniProtKB-EC"/>
</dbReference>
<dbReference type="GO" id="GO:0036211">
    <property type="term" value="P:protein modification process"/>
    <property type="evidence" value="ECO:0007669"/>
    <property type="project" value="InterPro"/>
</dbReference>
<dbReference type="CDD" id="cd16444">
    <property type="entry name" value="LipB"/>
    <property type="match status" value="1"/>
</dbReference>
<dbReference type="FunFam" id="3.30.930.10:FF:000020">
    <property type="entry name" value="Octanoyltransferase"/>
    <property type="match status" value="1"/>
</dbReference>
<dbReference type="Gene3D" id="3.30.930.10">
    <property type="entry name" value="Bira Bifunctional Protein, Domain 2"/>
    <property type="match status" value="1"/>
</dbReference>
<dbReference type="HAMAP" id="MF_00013">
    <property type="entry name" value="LipB"/>
    <property type="match status" value="1"/>
</dbReference>
<dbReference type="InterPro" id="IPR045864">
    <property type="entry name" value="aa-tRNA-synth_II/BPL/LPL"/>
</dbReference>
<dbReference type="InterPro" id="IPR004143">
    <property type="entry name" value="BPL_LPL_catalytic"/>
</dbReference>
<dbReference type="InterPro" id="IPR000544">
    <property type="entry name" value="Octanoyltransferase"/>
</dbReference>
<dbReference type="InterPro" id="IPR020605">
    <property type="entry name" value="Octanoyltransferase_CS"/>
</dbReference>
<dbReference type="NCBIfam" id="TIGR00214">
    <property type="entry name" value="lipB"/>
    <property type="match status" value="1"/>
</dbReference>
<dbReference type="NCBIfam" id="NF010922">
    <property type="entry name" value="PRK14342.1"/>
    <property type="match status" value="1"/>
</dbReference>
<dbReference type="PANTHER" id="PTHR10993:SF7">
    <property type="entry name" value="LIPOYLTRANSFERASE 2, MITOCHONDRIAL-RELATED"/>
    <property type="match status" value="1"/>
</dbReference>
<dbReference type="PANTHER" id="PTHR10993">
    <property type="entry name" value="OCTANOYLTRANSFERASE"/>
    <property type="match status" value="1"/>
</dbReference>
<dbReference type="Pfam" id="PF21948">
    <property type="entry name" value="LplA-B_cat"/>
    <property type="match status" value="1"/>
</dbReference>
<dbReference type="PIRSF" id="PIRSF016262">
    <property type="entry name" value="LPLase"/>
    <property type="match status" value="1"/>
</dbReference>
<dbReference type="SUPFAM" id="SSF55681">
    <property type="entry name" value="Class II aaRS and biotin synthetases"/>
    <property type="match status" value="1"/>
</dbReference>
<dbReference type="PROSITE" id="PS51733">
    <property type="entry name" value="BPL_LPL_CATALYTIC"/>
    <property type="match status" value="1"/>
</dbReference>
<dbReference type="PROSITE" id="PS01313">
    <property type="entry name" value="LIPB"/>
    <property type="match status" value="1"/>
</dbReference>
<accession>Q8K9Q3</accession>
<comment type="function">
    <text evidence="1">Catalyzes the transfer of endogenously produced octanoic acid from octanoyl-acyl-carrier-protein onto the lipoyl domains of lipoate-dependent enzymes. Lipoyl-ACP can also act as a substrate although octanoyl-ACP is likely to be the physiological substrate.</text>
</comment>
<comment type="catalytic activity">
    <reaction evidence="1">
        <text>octanoyl-[ACP] + L-lysyl-[protein] = N(6)-octanoyl-L-lysyl-[protein] + holo-[ACP] + H(+)</text>
        <dbReference type="Rhea" id="RHEA:17665"/>
        <dbReference type="Rhea" id="RHEA-COMP:9636"/>
        <dbReference type="Rhea" id="RHEA-COMP:9685"/>
        <dbReference type="Rhea" id="RHEA-COMP:9752"/>
        <dbReference type="Rhea" id="RHEA-COMP:9928"/>
        <dbReference type="ChEBI" id="CHEBI:15378"/>
        <dbReference type="ChEBI" id="CHEBI:29969"/>
        <dbReference type="ChEBI" id="CHEBI:64479"/>
        <dbReference type="ChEBI" id="CHEBI:78463"/>
        <dbReference type="ChEBI" id="CHEBI:78809"/>
        <dbReference type="EC" id="2.3.1.181"/>
    </reaction>
</comment>
<comment type="pathway">
    <text evidence="1">Protein modification; protein lipoylation via endogenous pathway; protein N(6)-(lipoyl)lysine from octanoyl-[acyl-carrier-protein]: step 1/2.</text>
</comment>
<comment type="subcellular location">
    <subcellularLocation>
        <location evidence="1">Cytoplasm</location>
    </subcellularLocation>
</comment>
<comment type="miscellaneous">
    <text evidence="1">In the reaction, the free carboxyl group of octanoic acid is attached via an amide linkage to the epsilon-amino group of a specific lysine residue of lipoyl domains of lipoate-dependent enzymes.</text>
</comment>
<comment type="similarity">
    <text evidence="1">Belongs to the LipB family.</text>
</comment>
<comment type="sequence caution" evidence="3">
    <conflict type="erroneous initiation">
        <sequence resource="EMBL-CDS" id="AAM67816"/>
    </conflict>
    <text>Truncated N-terminus.</text>
</comment>
<proteinExistence type="inferred from homology"/>
<name>LIPB_BUCAP</name>
<feature type="chain" id="PRO_0000062821" description="Octanoyltransferase">
    <location>
        <begin position="1"/>
        <end position="218"/>
    </location>
</feature>
<feature type="domain" description="BPL/LPL catalytic" evidence="2">
    <location>
        <begin position="32"/>
        <end position="211"/>
    </location>
</feature>
<feature type="active site" description="Acyl-thioester intermediate" evidence="1">
    <location>
        <position position="173"/>
    </location>
</feature>
<feature type="binding site" evidence="1">
    <location>
        <begin position="75"/>
        <end position="82"/>
    </location>
    <ligand>
        <name>substrate</name>
    </ligand>
</feature>
<feature type="binding site" evidence="1">
    <location>
        <begin position="142"/>
        <end position="144"/>
    </location>
    <ligand>
        <name>substrate</name>
    </ligand>
</feature>
<feature type="binding site" evidence="1">
    <location>
        <begin position="155"/>
        <end position="157"/>
    </location>
    <ligand>
        <name>substrate</name>
    </ligand>
</feature>
<feature type="site" description="Lowers pKa of active site Cys" evidence="1">
    <location>
        <position position="139"/>
    </location>
</feature>
<reference key="1">
    <citation type="journal article" date="2002" name="Science">
        <title>50 million years of genomic stasis in endosymbiotic bacteria.</title>
        <authorList>
            <person name="Tamas I."/>
            <person name="Klasson L."/>
            <person name="Canbaeck B."/>
            <person name="Naeslund A.K."/>
            <person name="Eriksson A.-S."/>
            <person name="Wernegreen J.J."/>
            <person name="Sandstroem J.P."/>
            <person name="Moran N.A."/>
            <person name="Andersson S.G.E."/>
        </authorList>
    </citation>
    <scope>NUCLEOTIDE SEQUENCE [LARGE SCALE GENOMIC DNA]</scope>
    <source>
        <strain>Sg</strain>
    </source>
</reference>
<evidence type="ECO:0000255" key="1">
    <source>
        <dbReference type="HAMAP-Rule" id="MF_00013"/>
    </source>
</evidence>
<evidence type="ECO:0000255" key="2">
    <source>
        <dbReference type="PROSITE-ProRule" id="PRU01067"/>
    </source>
</evidence>
<evidence type="ECO:0000305" key="3"/>